<comment type="function">
    <text>Adenosylhomocysteine is a competitive inhibitor of S-adenosyl-L-methionine-dependent methyl transferase reactions; therefore adenosylhomocysteinase may play a key role in the control of methylations via regulation of the intracellular concentration of adenosylhomocysteine.</text>
</comment>
<comment type="catalytic activity">
    <reaction>
        <text>S-adenosyl-L-homocysteine + H2O = L-homocysteine + adenosine</text>
        <dbReference type="Rhea" id="RHEA:21708"/>
        <dbReference type="ChEBI" id="CHEBI:15377"/>
        <dbReference type="ChEBI" id="CHEBI:16335"/>
        <dbReference type="ChEBI" id="CHEBI:57856"/>
        <dbReference type="ChEBI" id="CHEBI:58199"/>
        <dbReference type="EC" id="3.13.2.1"/>
    </reaction>
</comment>
<comment type="cofactor">
    <cofactor>
        <name>NAD(+)</name>
        <dbReference type="ChEBI" id="CHEBI:57540"/>
    </cofactor>
    <text>Binds 1 NAD(+) per subunit.</text>
</comment>
<comment type="pathway">
    <text>Amino-acid biosynthesis; L-homocysteine biosynthesis; L-homocysteine from S-adenosyl-L-homocysteine: step 1/1.</text>
</comment>
<comment type="subunit">
    <text>Homotetramer.</text>
</comment>
<comment type="tissue specificity">
    <text>Mainly in floral buds and stems.</text>
</comment>
<comment type="similarity">
    <text evidence="2">Belongs to the adenosylhomocysteinase family.</text>
</comment>
<feature type="chain" id="PRO_0000116928" description="Adenosylhomocysteinase">
    <location>
        <begin position="1"/>
        <end position="485"/>
    </location>
</feature>
<feature type="binding site" evidence="1">
    <location>
        <position position="64"/>
    </location>
    <ligand>
        <name>substrate</name>
    </ligand>
</feature>
<feature type="binding site" evidence="1">
    <location>
        <position position="139"/>
    </location>
    <ligand>
        <name>substrate</name>
    </ligand>
</feature>
<feature type="binding site" evidence="1">
    <location>
        <position position="205"/>
    </location>
    <ligand>
        <name>substrate</name>
    </ligand>
</feature>
<feature type="binding site" evidence="1">
    <location>
        <begin position="206"/>
        <end position="208"/>
    </location>
    <ligand>
        <name>NAD(+)</name>
        <dbReference type="ChEBI" id="CHEBI:57540"/>
    </ligand>
</feature>
<feature type="binding site" evidence="1">
    <location>
        <position position="235"/>
    </location>
    <ligand>
        <name>substrate</name>
    </ligand>
</feature>
<feature type="binding site" evidence="1">
    <location>
        <position position="239"/>
    </location>
    <ligand>
        <name>substrate</name>
    </ligand>
</feature>
<feature type="binding site" evidence="1">
    <location>
        <position position="240"/>
    </location>
    <ligand>
        <name>NAD(+)</name>
        <dbReference type="ChEBI" id="CHEBI:57540"/>
    </ligand>
</feature>
<feature type="binding site" evidence="1">
    <location>
        <begin position="269"/>
        <end position="274"/>
    </location>
    <ligand>
        <name>NAD(+)</name>
        <dbReference type="ChEBI" id="CHEBI:57540"/>
    </ligand>
</feature>
<feature type="binding site" evidence="1">
    <location>
        <position position="292"/>
    </location>
    <ligand>
        <name>NAD(+)</name>
        <dbReference type="ChEBI" id="CHEBI:57540"/>
    </ligand>
</feature>
<feature type="binding site" evidence="1">
    <location>
        <position position="327"/>
    </location>
    <ligand>
        <name>NAD(+)</name>
        <dbReference type="ChEBI" id="CHEBI:57540"/>
    </ligand>
</feature>
<feature type="binding site" evidence="1">
    <location>
        <begin position="348"/>
        <end position="350"/>
    </location>
    <ligand>
        <name>NAD(+)</name>
        <dbReference type="ChEBI" id="CHEBI:57540"/>
    </ligand>
</feature>
<feature type="binding site" evidence="1">
    <location>
        <position position="397"/>
    </location>
    <ligand>
        <name>NAD(+)</name>
        <dbReference type="ChEBI" id="CHEBI:57540"/>
    </ligand>
</feature>
<feature type="sequence conflict" description="In Ref. 1; AAA33855." evidence="2" ref="1">
    <original>C</original>
    <variation>D</variation>
    <location>
        <position position="346"/>
    </location>
</feature>
<feature type="sequence conflict" description="In Ref. 1; AAA33855." evidence="2" ref="1">
    <original>L</original>
    <variation>C</variation>
    <location>
        <position position="439"/>
    </location>
</feature>
<gene>
    <name type="primary">SAHH</name>
    <name type="synonym">SHH</name>
</gene>
<accession>Q01781</accession>
<keyword id="KW-0378">Hydrolase</keyword>
<keyword id="KW-0520">NAD</keyword>
<keyword id="KW-0554">One-carbon metabolism</keyword>
<organism>
    <name type="scientific">Petroselinum crispum</name>
    <name type="common">Parsley</name>
    <name type="synonym">Petroselinum hortense</name>
    <dbReference type="NCBI Taxonomy" id="4043"/>
    <lineage>
        <taxon>Eukaryota</taxon>
        <taxon>Viridiplantae</taxon>
        <taxon>Streptophyta</taxon>
        <taxon>Embryophyta</taxon>
        <taxon>Tracheophyta</taxon>
        <taxon>Spermatophyta</taxon>
        <taxon>Magnoliopsida</taxon>
        <taxon>eudicotyledons</taxon>
        <taxon>Gunneridae</taxon>
        <taxon>Pentapetalae</taxon>
        <taxon>asterids</taxon>
        <taxon>campanulids</taxon>
        <taxon>Apiales</taxon>
        <taxon>Apiaceae</taxon>
        <taxon>Apioideae</taxon>
        <taxon>apioid superclade</taxon>
        <taxon>Apieae</taxon>
        <taxon>Petroselinum</taxon>
    </lineage>
</organism>
<evidence type="ECO:0000250" key="1"/>
<evidence type="ECO:0000305" key="2"/>
<name>SAHH_PETCR</name>
<dbReference type="EC" id="3.13.2.1"/>
<dbReference type="EMBL" id="M81885">
    <property type="protein sequence ID" value="AAA33856.1"/>
    <property type="molecule type" value="mRNA"/>
</dbReference>
<dbReference type="EMBL" id="M62756">
    <property type="protein sequence ID" value="AAA33855.1"/>
    <property type="molecule type" value="mRNA"/>
</dbReference>
<dbReference type="PIR" id="T15035">
    <property type="entry name" value="T15035"/>
</dbReference>
<dbReference type="SMR" id="Q01781"/>
<dbReference type="UniPathway" id="UPA00314">
    <property type="reaction ID" value="UER00076"/>
</dbReference>
<dbReference type="GO" id="GO:0005829">
    <property type="term" value="C:cytosol"/>
    <property type="evidence" value="ECO:0007669"/>
    <property type="project" value="TreeGrafter"/>
</dbReference>
<dbReference type="GO" id="GO:0004013">
    <property type="term" value="F:adenosylhomocysteinase activity"/>
    <property type="evidence" value="ECO:0007669"/>
    <property type="project" value="RHEA"/>
</dbReference>
<dbReference type="GO" id="GO:0006730">
    <property type="term" value="P:one-carbon metabolic process"/>
    <property type="evidence" value="ECO:0007669"/>
    <property type="project" value="UniProtKB-KW"/>
</dbReference>
<dbReference type="GO" id="GO:0033353">
    <property type="term" value="P:S-adenosylmethionine cycle"/>
    <property type="evidence" value="ECO:0007669"/>
    <property type="project" value="TreeGrafter"/>
</dbReference>
<dbReference type="CDD" id="cd00401">
    <property type="entry name" value="SAHH"/>
    <property type="match status" value="1"/>
</dbReference>
<dbReference type="FunFam" id="3.40.50.720:FF:000004">
    <property type="entry name" value="Adenosylhomocysteinase"/>
    <property type="match status" value="1"/>
</dbReference>
<dbReference type="Gene3D" id="3.40.50.1480">
    <property type="entry name" value="Adenosylhomocysteinase-like"/>
    <property type="match status" value="1"/>
</dbReference>
<dbReference type="Gene3D" id="3.40.50.720">
    <property type="entry name" value="NAD(P)-binding Rossmann-like Domain"/>
    <property type="match status" value="1"/>
</dbReference>
<dbReference type="HAMAP" id="MF_00563">
    <property type="entry name" value="AdoHcyase"/>
    <property type="match status" value="1"/>
</dbReference>
<dbReference type="InterPro" id="IPR042172">
    <property type="entry name" value="Adenosylhomocyst_ase-like_sf"/>
</dbReference>
<dbReference type="InterPro" id="IPR000043">
    <property type="entry name" value="Adenosylhomocysteinase-like"/>
</dbReference>
<dbReference type="InterPro" id="IPR015878">
    <property type="entry name" value="Ado_hCys_hydrolase_NAD-bd"/>
</dbReference>
<dbReference type="InterPro" id="IPR036291">
    <property type="entry name" value="NAD(P)-bd_dom_sf"/>
</dbReference>
<dbReference type="InterPro" id="IPR020082">
    <property type="entry name" value="S-Ado-L-homoCys_hydrolase_CS"/>
</dbReference>
<dbReference type="NCBIfam" id="TIGR00936">
    <property type="entry name" value="ahcY"/>
    <property type="match status" value="1"/>
</dbReference>
<dbReference type="NCBIfam" id="NF004005">
    <property type="entry name" value="PRK05476.2-3"/>
    <property type="match status" value="1"/>
</dbReference>
<dbReference type="PANTHER" id="PTHR23420">
    <property type="entry name" value="ADENOSYLHOMOCYSTEINASE"/>
    <property type="match status" value="1"/>
</dbReference>
<dbReference type="PANTHER" id="PTHR23420:SF0">
    <property type="entry name" value="ADENOSYLHOMOCYSTEINASE"/>
    <property type="match status" value="1"/>
</dbReference>
<dbReference type="Pfam" id="PF05221">
    <property type="entry name" value="AdoHcyase"/>
    <property type="match status" value="1"/>
</dbReference>
<dbReference type="Pfam" id="PF00670">
    <property type="entry name" value="AdoHcyase_NAD"/>
    <property type="match status" value="1"/>
</dbReference>
<dbReference type="PIRSF" id="PIRSF001109">
    <property type="entry name" value="Ad_hcy_hydrolase"/>
    <property type="match status" value="1"/>
</dbReference>
<dbReference type="SMART" id="SM00996">
    <property type="entry name" value="AdoHcyase"/>
    <property type="match status" value="1"/>
</dbReference>
<dbReference type="SMART" id="SM00997">
    <property type="entry name" value="AdoHcyase_NAD"/>
    <property type="match status" value="1"/>
</dbReference>
<dbReference type="SUPFAM" id="SSF52283">
    <property type="entry name" value="Formate/glycerate dehydrogenase catalytic domain-like"/>
    <property type="match status" value="1"/>
</dbReference>
<dbReference type="SUPFAM" id="SSF51735">
    <property type="entry name" value="NAD(P)-binding Rossmann-fold domains"/>
    <property type="match status" value="1"/>
</dbReference>
<dbReference type="PROSITE" id="PS00738">
    <property type="entry name" value="ADOHCYASE_1"/>
    <property type="match status" value="1"/>
</dbReference>
<dbReference type="PROSITE" id="PS00739">
    <property type="entry name" value="ADOHCYASE_2"/>
    <property type="match status" value="1"/>
</dbReference>
<protein>
    <recommendedName>
        <fullName>Adenosylhomocysteinase</fullName>
        <shortName>AdoHcyase</shortName>
        <ecNumber>3.13.2.1</ecNumber>
    </recommendedName>
    <alternativeName>
        <fullName>S-adenosyl-L-homocysteine hydrolase</fullName>
    </alternativeName>
</protein>
<proteinExistence type="evidence at transcript level"/>
<reference key="1">
    <citation type="journal article" date="1992" name="Proc. Natl. Acad. Sci. U.S.A.">
        <title>Induction by fungal elicitor of S-adenosyl-L-methionine synthetase and S-adenosyl-L-homocysteine hydrolase mRNAs in cultured cells and leaves of Petroselinum crispum.</title>
        <authorList>
            <person name="Kawalleck P."/>
            <person name="Plesch G."/>
            <person name="Hahlbrock K."/>
            <person name="Somssich I.E."/>
        </authorList>
    </citation>
    <scope>NUCLEOTIDE SEQUENCE [MRNA]</scope>
    <source>
        <tissue>Leaf</tissue>
    </source>
</reference>
<reference key="2">
    <citation type="journal article" date="1989" name="Plant Mol. Biol.">
        <title>Differential early activation of defense-related genes in elicitor-treated parsley cells.</title>
        <authorList>
            <person name="Somssich I.E."/>
            <person name="Bollmann J."/>
            <person name="Hahlbrock K."/>
            <person name="Kombrink E."/>
            <person name="Schulz W."/>
        </authorList>
    </citation>
    <scope>NUCLEOTIDE SEQUENCE [MRNA] OF 259-485</scope>
</reference>
<sequence length="485" mass="53181">MALSVEKTAAGREYKVKDMSLADFGRLELELAEVEMPGLMSCRTEFGPSQPFKGARITGSLHMTIQTGVLIETLTALGAEVRWCSCNIFSTQDHAAAAIARDSCAVFAWKGETLQEYWWCTERALDWGPDGGPDLIVDDGGDATLLIHEGVKAEEEYKKSGAIPDPASTDNAEFQIVLSIIRDGLKSDPMKYHKMKDRLVGVSEETTTGVKRLYQMQQNGTLLFPAINVNDSVTKSKFDNLYGCRHSLPDGLMRATDVMIAGKVALIAGYGDVGKGCAAAMKQAGARVIVTEIDPICALQATMEGLQVLPLEDVVSEVDIFVTTTGNKDIIMVSDMRKMKNNAIVCNIGHFDNEIDMLGLETYPGVKRITIKPQTDRWVFPDTGRGIIILAEGRLMNLGCATGHPSFVMSCSFTNQVIAQLELWNEKSSGKYEKKVYVLPKHLDEKVAALHLGKLGAKLTKLSKDQADYISVPVEGPYKPAHYRY</sequence>